<name>3MGH_FRACC</name>
<feature type="chain" id="PRO_0000265024" description="Putative 3-methyladenine DNA glycosylase">
    <location>
        <begin position="1"/>
        <end position="212"/>
    </location>
</feature>
<sequence length="212" mass="21891">MAPTDGAAPDGVDFYDRPVLAVAPALLGATVWHGPVAVRITEVEAYGGLDDPASHAYRGPTPRAAVMFGPPGRAYVYLSYGVHWCLNVVCGPVGSASAVLLRSGEVVAGRDLVAGRFPRLVEADLARGPGRLGRALAVTGALSGTTITGPGPVTVALAGGRGIRPPGPPGISGGRVRRGPRAGIRVATEWPWRFWLAGEATVSGPRPPRRPR</sequence>
<gene>
    <name type="ordered locus">Francci3_3167</name>
</gene>
<keyword id="KW-0227">DNA damage</keyword>
<keyword id="KW-0234">DNA repair</keyword>
<keyword id="KW-0378">Hydrolase</keyword>
<keyword id="KW-1185">Reference proteome</keyword>
<evidence type="ECO:0000255" key="1">
    <source>
        <dbReference type="HAMAP-Rule" id="MF_00527"/>
    </source>
</evidence>
<accession>Q2J868</accession>
<comment type="similarity">
    <text evidence="1">Belongs to the DNA glycosylase MPG family.</text>
</comment>
<organism>
    <name type="scientific">Frankia casuarinae (strain DSM 45818 / CECT 9043 / HFP020203 / CcI3)</name>
    <dbReference type="NCBI Taxonomy" id="106370"/>
    <lineage>
        <taxon>Bacteria</taxon>
        <taxon>Bacillati</taxon>
        <taxon>Actinomycetota</taxon>
        <taxon>Actinomycetes</taxon>
        <taxon>Frankiales</taxon>
        <taxon>Frankiaceae</taxon>
        <taxon>Frankia</taxon>
    </lineage>
</organism>
<protein>
    <recommendedName>
        <fullName evidence="1">Putative 3-methyladenine DNA glycosylase</fullName>
        <ecNumber evidence="1">3.2.2.-</ecNumber>
    </recommendedName>
</protein>
<proteinExistence type="inferred from homology"/>
<dbReference type="EC" id="3.2.2.-" evidence="1"/>
<dbReference type="EMBL" id="CP000249">
    <property type="protein sequence ID" value="ABD12524.1"/>
    <property type="molecule type" value="Genomic_DNA"/>
</dbReference>
<dbReference type="RefSeq" id="WP_011437552.1">
    <property type="nucleotide sequence ID" value="NZ_MSEA01000129.1"/>
</dbReference>
<dbReference type="SMR" id="Q2J868"/>
<dbReference type="STRING" id="106370.Francci3_3167"/>
<dbReference type="KEGG" id="fra:Francci3_3167"/>
<dbReference type="eggNOG" id="COG2094">
    <property type="taxonomic scope" value="Bacteria"/>
</dbReference>
<dbReference type="HOGENOM" id="CLU_060471_3_0_11"/>
<dbReference type="OrthoDB" id="9794313at2"/>
<dbReference type="PhylomeDB" id="Q2J868"/>
<dbReference type="Proteomes" id="UP000001937">
    <property type="component" value="Chromosome"/>
</dbReference>
<dbReference type="GO" id="GO:0003905">
    <property type="term" value="F:alkylbase DNA N-glycosylase activity"/>
    <property type="evidence" value="ECO:0007669"/>
    <property type="project" value="InterPro"/>
</dbReference>
<dbReference type="GO" id="GO:0003677">
    <property type="term" value="F:DNA binding"/>
    <property type="evidence" value="ECO:0007669"/>
    <property type="project" value="InterPro"/>
</dbReference>
<dbReference type="GO" id="GO:0006284">
    <property type="term" value="P:base-excision repair"/>
    <property type="evidence" value="ECO:0007669"/>
    <property type="project" value="InterPro"/>
</dbReference>
<dbReference type="CDD" id="cd00540">
    <property type="entry name" value="AAG"/>
    <property type="match status" value="1"/>
</dbReference>
<dbReference type="Gene3D" id="3.10.300.10">
    <property type="entry name" value="Methylpurine-DNA glycosylase (MPG)"/>
    <property type="match status" value="1"/>
</dbReference>
<dbReference type="HAMAP" id="MF_00527">
    <property type="entry name" value="3MGH"/>
    <property type="match status" value="1"/>
</dbReference>
<dbReference type="InterPro" id="IPR011034">
    <property type="entry name" value="Formyl_transferase-like_C_sf"/>
</dbReference>
<dbReference type="InterPro" id="IPR003180">
    <property type="entry name" value="MPG"/>
</dbReference>
<dbReference type="InterPro" id="IPR036995">
    <property type="entry name" value="MPG_sf"/>
</dbReference>
<dbReference type="NCBIfam" id="TIGR00567">
    <property type="entry name" value="3mg"/>
    <property type="match status" value="1"/>
</dbReference>
<dbReference type="NCBIfam" id="NF002003">
    <property type="entry name" value="PRK00802.1-3"/>
    <property type="match status" value="1"/>
</dbReference>
<dbReference type="PANTHER" id="PTHR10429">
    <property type="entry name" value="DNA-3-METHYLADENINE GLYCOSYLASE"/>
    <property type="match status" value="1"/>
</dbReference>
<dbReference type="PANTHER" id="PTHR10429:SF0">
    <property type="entry name" value="DNA-3-METHYLADENINE GLYCOSYLASE"/>
    <property type="match status" value="1"/>
</dbReference>
<dbReference type="Pfam" id="PF02245">
    <property type="entry name" value="Pur_DNA_glyco"/>
    <property type="match status" value="1"/>
</dbReference>
<dbReference type="SUPFAM" id="SSF50486">
    <property type="entry name" value="FMT C-terminal domain-like"/>
    <property type="match status" value="1"/>
</dbReference>
<reference key="1">
    <citation type="journal article" date="2007" name="Genome Res.">
        <title>Genome characteristics of facultatively symbiotic Frankia sp. strains reflect host range and host plant biogeography.</title>
        <authorList>
            <person name="Normand P."/>
            <person name="Lapierre P."/>
            <person name="Tisa L.S."/>
            <person name="Gogarten J.P."/>
            <person name="Alloisio N."/>
            <person name="Bagnarol E."/>
            <person name="Bassi C.A."/>
            <person name="Berry A.M."/>
            <person name="Bickhart D.M."/>
            <person name="Choisne N."/>
            <person name="Couloux A."/>
            <person name="Cournoyer B."/>
            <person name="Cruveiller S."/>
            <person name="Daubin V."/>
            <person name="Demange N."/>
            <person name="Francino M.P."/>
            <person name="Goltsman E."/>
            <person name="Huang Y."/>
            <person name="Kopp O.R."/>
            <person name="Labarre L."/>
            <person name="Lapidus A."/>
            <person name="Lavire C."/>
            <person name="Marechal J."/>
            <person name="Martinez M."/>
            <person name="Mastronunzio J.E."/>
            <person name="Mullin B.C."/>
            <person name="Niemann J."/>
            <person name="Pujic P."/>
            <person name="Rawnsley T."/>
            <person name="Rouy Z."/>
            <person name="Schenowitz C."/>
            <person name="Sellstedt A."/>
            <person name="Tavares F."/>
            <person name="Tomkins J.P."/>
            <person name="Vallenet D."/>
            <person name="Valverde C."/>
            <person name="Wall L.G."/>
            <person name="Wang Y."/>
            <person name="Medigue C."/>
            <person name="Benson D.R."/>
        </authorList>
    </citation>
    <scope>NUCLEOTIDE SEQUENCE [LARGE SCALE GENOMIC DNA]</scope>
    <source>
        <strain>DSM 45818 / CECT 9043 / HFP020203 / CcI3</strain>
    </source>
</reference>